<reference key="1">
    <citation type="journal article" date="2011" name="PLoS Genet.">
        <title>The evolution of host specialization in the vertebrate gut symbiont Lactobacillus reuteri.</title>
        <authorList>
            <person name="Frese S.A."/>
            <person name="Benson A.K."/>
            <person name="Tannock G.W."/>
            <person name="Loach D.M."/>
            <person name="Kim J."/>
            <person name="Zhang M."/>
            <person name="Oh P.L."/>
            <person name="Heng N.C."/>
            <person name="Patil P.B."/>
            <person name="Juge N."/>
            <person name="Mackenzie D.A."/>
            <person name="Pearson B.M."/>
            <person name="Lapidus A."/>
            <person name="Dalin E."/>
            <person name="Tice H."/>
            <person name="Goltsman E."/>
            <person name="Land M."/>
            <person name="Hauser L."/>
            <person name="Ivanova N."/>
            <person name="Kyrpides N.C."/>
            <person name="Walter J."/>
        </authorList>
    </citation>
    <scope>NUCLEOTIDE SEQUENCE [LARGE SCALE GENOMIC DNA]</scope>
    <scope>FUNCTION</scope>
    <source>
        <strain>DSM 20016</strain>
    </source>
</reference>
<reference evidence="8" key="2">
    <citation type="journal article" date="2012" name="Acta Crystallogr. D">
        <title>Substrate channels revealed in the trimeric Lactobacillus reuteri bacterial microcompartment shell protein PduB.</title>
        <authorList>
            <person name="Pang A."/>
            <person name="Liang M."/>
            <person name="Prentice M.B."/>
            <person name="Pickersgill R.W."/>
        </authorList>
    </citation>
    <scope>X-RAY CRYSTALLOGRAPHY (1.56 ANGSTROMS)</scope>
    <scope>GLYCEROL-BINDING</scope>
    <scope>SUBUNIT</scope>
    <scope>DISULFIDE BONDS</scope>
    <source>
        <strain>DSM 20016</strain>
    </source>
</reference>
<organism>
    <name type="scientific">Limosilactobacillus reuteri (strain DSM 20016)</name>
    <name type="common">Lactobacillus reuteri</name>
    <dbReference type="NCBI Taxonomy" id="557436"/>
    <lineage>
        <taxon>Bacteria</taxon>
        <taxon>Bacillati</taxon>
        <taxon>Bacillota</taxon>
        <taxon>Bacilli</taxon>
        <taxon>Lactobacillales</taxon>
        <taxon>Lactobacillaceae</taxon>
        <taxon>Limosilactobacillus</taxon>
    </lineage>
</organism>
<gene>
    <name evidence="4" type="primary">pduB</name>
    <name type="ordered locus">Lreu_1748</name>
</gene>
<dbReference type="EMBL" id="CP000705">
    <property type="protein sequence ID" value="ABQ83987.1"/>
    <property type="molecule type" value="Genomic_DNA"/>
</dbReference>
<dbReference type="RefSeq" id="WP_003669200.1">
    <property type="nucleotide sequence ID" value="NZ_AZDD01000003.1"/>
</dbReference>
<dbReference type="PDB" id="4FAY">
    <property type="method" value="X-ray"/>
    <property type="resolution" value="1.56 A"/>
    <property type="chains" value="A/B/C=1-238"/>
</dbReference>
<dbReference type="PDBsum" id="4FAY"/>
<dbReference type="SMR" id="A5VMB3"/>
<dbReference type="STRING" id="557436.Lreu_1748"/>
<dbReference type="GeneID" id="77190615"/>
<dbReference type="KEGG" id="lre:Lreu_1748"/>
<dbReference type="PATRIC" id="fig|557436.17.peg.1055"/>
<dbReference type="eggNOG" id="COG4816">
    <property type="taxonomic scope" value="Bacteria"/>
</dbReference>
<dbReference type="HOGENOM" id="CLU_076302_0_0_9"/>
<dbReference type="OMA" id="SYACNKA"/>
<dbReference type="UniPathway" id="UPA00621"/>
<dbReference type="EvolutionaryTrace" id="A5VMB3"/>
<dbReference type="Proteomes" id="UP000001991">
    <property type="component" value="Chromosome"/>
</dbReference>
<dbReference type="GO" id="GO:0031469">
    <property type="term" value="C:bacterial microcompartment"/>
    <property type="evidence" value="ECO:0007669"/>
    <property type="project" value="UniProtKB-SubCell"/>
</dbReference>
<dbReference type="GO" id="GO:0005198">
    <property type="term" value="F:structural molecule activity"/>
    <property type="evidence" value="ECO:0007669"/>
    <property type="project" value="InterPro"/>
</dbReference>
<dbReference type="GO" id="GO:0051144">
    <property type="term" value="P:propanediol catabolic process"/>
    <property type="evidence" value="ECO:0007669"/>
    <property type="project" value="UniProtKB-UniPathway"/>
</dbReference>
<dbReference type="CDD" id="cd07047">
    <property type="entry name" value="BMC_PduB_repeat1"/>
    <property type="match status" value="1"/>
</dbReference>
<dbReference type="Gene3D" id="3.30.70.1710">
    <property type="match status" value="2"/>
</dbReference>
<dbReference type="InterPro" id="IPR044870">
    <property type="entry name" value="BMC_CP"/>
</dbReference>
<dbReference type="InterPro" id="IPR000249">
    <property type="entry name" value="BMC_dom"/>
</dbReference>
<dbReference type="InterPro" id="IPR037233">
    <property type="entry name" value="CcmK-like_sf"/>
</dbReference>
<dbReference type="InterPro" id="IPR009193">
    <property type="entry name" value="EutL_PduB"/>
</dbReference>
<dbReference type="InterPro" id="IPR030984">
    <property type="entry name" value="PduB"/>
</dbReference>
<dbReference type="NCBIfam" id="TIGR04501">
    <property type="entry name" value="microcomp_PduB"/>
    <property type="match status" value="1"/>
</dbReference>
<dbReference type="NCBIfam" id="NF011944">
    <property type="entry name" value="PRK15415.1"/>
    <property type="match status" value="1"/>
</dbReference>
<dbReference type="Pfam" id="PF00936">
    <property type="entry name" value="BMC"/>
    <property type="match status" value="1"/>
</dbReference>
<dbReference type="PIRSF" id="PIRSF012290">
    <property type="entry name" value="EutL_PduB"/>
    <property type="match status" value="1"/>
</dbReference>
<dbReference type="SMART" id="SM00877">
    <property type="entry name" value="BMC"/>
    <property type="match status" value="2"/>
</dbReference>
<dbReference type="SUPFAM" id="SSF143414">
    <property type="entry name" value="CcmK-like"/>
    <property type="match status" value="2"/>
</dbReference>
<dbReference type="PROSITE" id="PS51931">
    <property type="entry name" value="BMC_CP"/>
    <property type="match status" value="2"/>
</dbReference>
<feature type="chain" id="PRO_0000454248" description="Bacterial microcompartment shell protein PduB">
    <location>
        <begin position="1"/>
        <end position="238"/>
    </location>
</feature>
<feature type="domain" description="BMC circularly permuted 1" evidence="2">
    <location>
        <begin position="14"/>
        <end position="125"/>
    </location>
</feature>
<feature type="domain" description="BMC circularly permuted 2" evidence="2">
    <location>
        <begin position="126"/>
        <end position="225"/>
    </location>
</feature>
<feature type="disulfide bond" evidence="7 8">
    <location>
        <begin position="158"/>
        <end position="197"/>
    </location>
</feature>
<feature type="strand" evidence="9">
    <location>
        <begin position="14"/>
        <end position="18"/>
    </location>
</feature>
<feature type="turn" evidence="9">
    <location>
        <begin position="19"/>
        <end position="22"/>
    </location>
</feature>
<feature type="strand" evidence="9">
    <location>
        <begin position="23"/>
        <end position="30"/>
    </location>
</feature>
<feature type="helix" evidence="9">
    <location>
        <begin position="33"/>
        <end position="36"/>
    </location>
</feature>
<feature type="strand" evidence="9">
    <location>
        <begin position="46"/>
        <end position="55"/>
    </location>
</feature>
<feature type="helix" evidence="9">
    <location>
        <begin position="58"/>
        <end position="70"/>
    </location>
</feature>
<feature type="strand" evidence="9">
    <location>
        <begin position="74"/>
        <end position="79"/>
    </location>
</feature>
<feature type="strand" evidence="9">
    <location>
        <begin position="87"/>
        <end position="90"/>
    </location>
</feature>
<feature type="strand" evidence="9">
    <location>
        <begin position="92"/>
        <end position="99"/>
    </location>
</feature>
<feature type="helix" evidence="9">
    <location>
        <begin position="101"/>
        <end position="118"/>
    </location>
</feature>
<feature type="turn" evidence="9">
    <location>
        <begin position="119"/>
        <end position="121"/>
    </location>
</feature>
<feature type="strand" evidence="9">
    <location>
        <begin position="122"/>
        <end position="125"/>
    </location>
</feature>
<feature type="strand" evidence="9">
    <location>
        <begin position="128"/>
        <end position="137"/>
    </location>
</feature>
<feature type="helix" evidence="9">
    <location>
        <begin position="140"/>
        <end position="146"/>
    </location>
</feature>
<feature type="strand" evidence="9">
    <location>
        <begin position="154"/>
        <end position="161"/>
    </location>
</feature>
<feature type="helix" evidence="9">
    <location>
        <begin position="162"/>
        <end position="175"/>
    </location>
</feature>
<feature type="strand" evidence="9">
    <location>
        <begin position="179"/>
        <end position="185"/>
    </location>
</feature>
<feature type="strand" evidence="9">
    <location>
        <begin position="188"/>
        <end position="192"/>
    </location>
</feature>
<feature type="strand" evidence="9">
    <location>
        <begin position="196"/>
        <end position="202"/>
    </location>
</feature>
<feature type="helix" evidence="9">
    <location>
        <begin position="204"/>
        <end position="223"/>
    </location>
</feature>
<protein>
    <recommendedName>
        <fullName>Bacterial microcompartment shell protein PduB</fullName>
    </recommendedName>
    <alternativeName>
        <fullName evidence="5">Bacterial microcompartment protein homotrimer</fullName>
        <shortName evidence="5">BMC-T</shortName>
    </alternativeName>
    <alternativeName>
        <fullName>Propanediol utilization protein PduB</fullName>
    </alternativeName>
</protein>
<comment type="function">
    <text evidence="1 6">One of the major shell proteins of the bacterial microcompartment (BMC) dedicated to 1,2-propanediol (1,2-PD) degradation (By similarity). Probably involved in a propanediol fermentation/reuterin formation pathway (Probable).</text>
</comment>
<comment type="pathway">
    <text evidence="6">Polyol metabolism; 1,2-propanediol degradation.</text>
</comment>
<comment type="subunit">
    <text evidence="3">Homotrimerizes to form a pseudohexamer with a central pore 7.5 Angstroms wide and 22 Angstroms long; the pore channel in the crystal binds up to 4 glycerol molecules. A disulfide bond forms in the pore, it is not clear if this is an artifact. The trimers pack into an array.</text>
</comment>
<comment type="subcellular location">
    <subcellularLocation>
        <location evidence="1">Bacterial microcompartment</location>
    </subcellularLocation>
</comment>
<comment type="domain">
    <text evidence="5">Has 2 BMC domains which can evolve independently of each other.</text>
</comment>
<comment type="similarity">
    <text evidence="2">Belongs to the EutL/PduB family.</text>
</comment>
<name>PDUB_LIMRD</name>
<sequence length="238" mass="24945">MNDFLNSTSTVPEFVGASEIGDTIGMVIPRVDQQLLDKLHVTKQYKTLGILSDRTGAGPQIMAMDEGIKATNMECIDVEWPRDTKGGGGHGCLIIIGGDDPADARQAIRVALDNLHRTFGDVYNAKAGHLELQFTARAAGAAHLGLGAVEGKAFGLICGCPSGIGVVMGDKALKTAGVEPLNFTSPSHGTSFSNEGCLTITGDSGAVRQAVMAGREVGLKLLSQFGEEPVNDFPSYIK</sequence>
<evidence type="ECO:0000250" key="1">
    <source>
        <dbReference type="UniProtKB" id="P37449"/>
    </source>
</evidence>
<evidence type="ECO:0000255" key="2">
    <source>
        <dbReference type="PROSITE-ProRule" id="PRU01279"/>
    </source>
</evidence>
<evidence type="ECO:0000269" key="3">
    <source>
    </source>
</evidence>
<evidence type="ECO:0000303" key="4">
    <source>
    </source>
</evidence>
<evidence type="ECO:0000305" key="5"/>
<evidence type="ECO:0000305" key="6">
    <source>
    </source>
</evidence>
<evidence type="ECO:0000305" key="7">
    <source>
    </source>
</evidence>
<evidence type="ECO:0007744" key="8">
    <source>
        <dbReference type="PDB" id="4FAY"/>
    </source>
</evidence>
<evidence type="ECO:0007829" key="9">
    <source>
        <dbReference type="PDB" id="4FAY"/>
    </source>
</evidence>
<accession>A5VMB3</accession>
<proteinExistence type="evidence at protein level"/>
<keyword id="KW-0002">3D-structure</keyword>
<keyword id="KW-1283">Bacterial microcompartment</keyword>
<keyword id="KW-1015">Disulfide bond</keyword>
<keyword id="KW-1185">Reference proteome</keyword>